<comment type="function">
    <text evidence="1">An ATP-dependent DNA helicase which unwinds DNA in a 3'-5' direction.</text>
</comment>
<comment type="catalytic activity">
    <reaction evidence="1">
        <text>Couples ATP hydrolysis with the unwinding of duplex DNA by translocating in the 3'-5' direction.</text>
        <dbReference type="EC" id="5.6.2.4"/>
    </reaction>
</comment>
<comment type="catalytic activity">
    <reaction evidence="1">
        <text>ATP + H2O = ADP + phosphate + H(+)</text>
        <dbReference type="Rhea" id="RHEA:13065"/>
        <dbReference type="ChEBI" id="CHEBI:15377"/>
        <dbReference type="ChEBI" id="CHEBI:15378"/>
        <dbReference type="ChEBI" id="CHEBI:30616"/>
        <dbReference type="ChEBI" id="CHEBI:43474"/>
        <dbReference type="ChEBI" id="CHEBI:456216"/>
    </reaction>
</comment>
<comment type="cofactor">
    <cofactor evidence="1">
        <name>Mg(2+)</name>
        <dbReference type="ChEBI" id="CHEBI:18420"/>
    </cofactor>
    <text evidence="1">Requires Mg(2+) for helicase activity.</text>
</comment>
<comment type="cofactor">
    <cofactor evidence="1">
        <name>Zn(2+)</name>
        <dbReference type="ChEBI" id="CHEBI:29105"/>
    </cofactor>
</comment>
<comment type="miscellaneous">
    <text evidence="5">Cyanobacteria do not encode always the HRDC found in most bacterial RecQ proteins.</text>
</comment>
<comment type="similarity">
    <text evidence="5">Belongs to the helicase family. RecQ subfamily.</text>
</comment>
<sequence length="478" mass="54787">MADRQSLEEALRRIWGYDHFRYPQGEVIDCLLARRDCLVVLPTGGGKSICFQLPALLGEGLTLVVSPLVALMEDQVQSLRRQNLPAACLHSQLSRPERKQVLYQLGQQQLKLLYLSPETLLSEPVWNLLRQPQVKLQGIMLDEAHCLVQWGDSFRPAYRRLGALRRGLGRDKGQIPLAAFTATADRQQQNLIVEGLNLRSPECFQVSPHRPQLHLKVKMVLSEYCRRQQLRRFLLKHLQESGLIYVRTRTMAINLAQWLQERGFDSEAYHGGLGPHQRRQLEQKWLTGQISSVVCTNAFGLGIDKPDTRWVLHYQAPLMLMDYLQEVGRAGRDLQPAECLTLVSEPTGWLDSGDRQLRQYFLSQASKYLQRAEVLSQQIPSQGNLGQLKAHFPDLEMALAWLHRRGNLEWLDPFNYRINPGHYQANPLEELKSQYRLMTQYLTTSRCRWQTILVAFGDNSPAARRPCGTCDNCLVGRC</sequence>
<reference key="1">
    <citation type="journal article" date="1996" name="DNA Res.">
        <title>Sequence analysis of the genome of the unicellular cyanobacterium Synechocystis sp. strain PCC6803. II. Sequence determination of the entire genome and assignment of potential protein-coding regions.</title>
        <authorList>
            <person name="Kaneko T."/>
            <person name="Sato S."/>
            <person name="Kotani H."/>
            <person name="Tanaka A."/>
            <person name="Asamizu E."/>
            <person name="Nakamura Y."/>
            <person name="Miyajima N."/>
            <person name="Hirosawa M."/>
            <person name="Sugiura M."/>
            <person name="Sasamoto S."/>
            <person name="Kimura T."/>
            <person name="Hosouchi T."/>
            <person name="Matsuno A."/>
            <person name="Muraki A."/>
            <person name="Nakazaki N."/>
            <person name="Naruo K."/>
            <person name="Okumura S."/>
            <person name="Shimpo S."/>
            <person name="Takeuchi C."/>
            <person name="Wada T."/>
            <person name="Watanabe A."/>
            <person name="Yamada M."/>
            <person name="Yasuda M."/>
            <person name="Tabata S."/>
        </authorList>
    </citation>
    <scope>NUCLEOTIDE SEQUENCE [LARGE SCALE GENOMIC DNA]</scope>
    <source>
        <strain>ATCC 27184 / PCC 6803 / Kazusa</strain>
    </source>
</reference>
<feature type="chain" id="PRO_0000205038" description="ATP-dependent DNA helicase RecQ">
    <location>
        <begin position="1"/>
        <end position="478"/>
    </location>
</feature>
<feature type="domain" description="Helicase ATP-binding" evidence="2">
    <location>
        <begin position="28"/>
        <end position="202"/>
    </location>
</feature>
<feature type="domain" description="Helicase C-terminal" evidence="3">
    <location>
        <begin position="229"/>
        <end position="380"/>
    </location>
</feature>
<feature type="short sequence motif" description="DEAH box">
    <location>
        <begin position="142"/>
        <end position="145"/>
    </location>
</feature>
<feature type="binding site" evidence="2">
    <location>
        <begin position="41"/>
        <end position="48"/>
    </location>
    <ligand>
        <name>ATP</name>
        <dbReference type="ChEBI" id="CHEBI:30616"/>
    </ligand>
</feature>
<feature type="binding site" evidence="1">
    <location>
        <position position="447"/>
    </location>
    <ligand>
        <name>Zn(2+)</name>
        <dbReference type="ChEBI" id="CHEBI:29105"/>
    </ligand>
</feature>
<feature type="binding site" evidence="1">
    <location>
        <position position="467"/>
    </location>
    <ligand>
        <name>Zn(2+)</name>
        <dbReference type="ChEBI" id="CHEBI:29105"/>
    </ligand>
</feature>
<feature type="binding site" evidence="1">
    <location>
        <position position="470"/>
    </location>
    <ligand>
        <name>Zn(2+)</name>
        <dbReference type="ChEBI" id="CHEBI:29105"/>
    </ligand>
</feature>
<feature type="binding site" evidence="1">
    <location>
        <position position="473"/>
    </location>
    <ligand>
        <name>Zn(2+)</name>
        <dbReference type="ChEBI" id="CHEBI:29105"/>
    </ligand>
</feature>
<evidence type="ECO:0000250" key="1">
    <source>
        <dbReference type="UniProtKB" id="P15043"/>
    </source>
</evidence>
<evidence type="ECO:0000255" key="2">
    <source>
        <dbReference type="PROSITE-ProRule" id="PRU00541"/>
    </source>
</evidence>
<evidence type="ECO:0000255" key="3">
    <source>
        <dbReference type="PROSITE-ProRule" id="PRU00542"/>
    </source>
</evidence>
<evidence type="ECO:0000303" key="4">
    <source>
    </source>
</evidence>
<evidence type="ECO:0000305" key="5"/>
<keyword id="KW-0067">ATP-binding</keyword>
<keyword id="KW-0227">DNA damage</keyword>
<keyword id="KW-0233">DNA recombination</keyword>
<keyword id="KW-0234">DNA repair</keyword>
<keyword id="KW-0238">DNA-binding</keyword>
<keyword id="KW-0347">Helicase</keyword>
<keyword id="KW-0378">Hydrolase</keyword>
<keyword id="KW-0413">Isomerase</keyword>
<keyword id="KW-0479">Metal-binding</keyword>
<keyword id="KW-0547">Nucleotide-binding</keyword>
<keyword id="KW-1185">Reference proteome</keyword>
<keyword id="KW-0862">Zinc</keyword>
<proteinExistence type="inferred from homology"/>
<protein>
    <recommendedName>
        <fullName evidence="4">ATP-dependent DNA helicase RecQ</fullName>
        <ecNumber evidence="1">5.6.2.4</ecNumber>
    </recommendedName>
    <alternativeName>
        <fullName evidence="5">DNA 3'-5' helicase RecQ</fullName>
    </alternativeName>
</protein>
<accession>P73421</accession>
<dbReference type="EC" id="5.6.2.4" evidence="1"/>
<dbReference type="EMBL" id="BA000022">
    <property type="protein sequence ID" value="BAA17461.1"/>
    <property type="molecule type" value="Genomic_DNA"/>
</dbReference>
<dbReference type="PIR" id="S77358">
    <property type="entry name" value="S77358"/>
</dbReference>
<dbReference type="SMR" id="P73421"/>
<dbReference type="FunCoup" id="P73421">
    <property type="interactions" value="10"/>
</dbReference>
<dbReference type="IntAct" id="P73421">
    <property type="interactions" value="3"/>
</dbReference>
<dbReference type="STRING" id="1148.gene:10498325"/>
<dbReference type="PaxDb" id="1148-1652540"/>
<dbReference type="EnsemblBacteria" id="BAA17461">
    <property type="protein sequence ID" value="BAA17461"/>
    <property type="gene ID" value="BAA17461"/>
</dbReference>
<dbReference type="KEGG" id="syn:slr1536"/>
<dbReference type="eggNOG" id="COG0514">
    <property type="taxonomic scope" value="Bacteria"/>
</dbReference>
<dbReference type="InParanoid" id="P73421"/>
<dbReference type="PhylomeDB" id="P73421"/>
<dbReference type="Proteomes" id="UP000001425">
    <property type="component" value="Chromosome"/>
</dbReference>
<dbReference type="GO" id="GO:0043590">
    <property type="term" value="C:bacterial nucleoid"/>
    <property type="evidence" value="ECO:0000318"/>
    <property type="project" value="GO_Central"/>
</dbReference>
<dbReference type="GO" id="GO:0005694">
    <property type="term" value="C:chromosome"/>
    <property type="evidence" value="ECO:0000318"/>
    <property type="project" value="GO_Central"/>
</dbReference>
<dbReference type="GO" id="GO:0005737">
    <property type="term" value="C:cytoplasm"/>
    <property type="evidence" value="ECO:0000318"/>
    <property type="project" value="GO_Central"/>
</dbReference>
<dbReference type="GO" id="GO:0030894">
    <property type="term" value="C:replisome"/>
    <property type="evidence" value="ECO:0000318"/>
    <property type="project" value="GO_Central"/>
</dbReference>
<dbReference type="GO" id="GO:0043138">
    <property type="term" value="F:3'-5' DNA helicase activity"/>
    <property type="evidence" value="ECO:0000318"/>
    <property type="project" value="GO_Central"/>
</dbReference>
<dbReference type="GO" id="GO:0005524">
    <property type="term" value="F:ATP binding"/>
    <property type="evidence" value="ECO:0007669"/>
    <property type="project" value="UniProtKB-KW"/>
</dbReference>
<dbReference type="GO" id="GO:0016887">
    <property type="term" value="F:ATP hydrolysis activity"/>
    <property type="evidence" value="ECO:0007669"/>
    <property type="project" value="RHEA"/>
</dbReference>
<dbReference type="GO" id="GO:0003677">
    <property type="term" value="F:DNA binding"/>
    <property type="evidence" value="ECO:0007669"/>
    <property type="project" value="UniProtKB-KW"/>
</dbReference>
<dbReference type="GO" id="GO:0009378">
    <property type="term" value="F:four-way junction helicase activity"/>
    <property type="evidence" value="ECO:0000318"/>
    <property type="project" value="GO_Central"/>
</dbReference>
<dbReference type="GO" id="GO:0046872">
    <property type="term" value="F:metal ion binding"/>
    <property type="evidence" value="ECO:0007669"/>
    <property type="project" value="UniProtKB-KW"/>
</dbReference>
<dbReference type="GO" id="GO:0006310">
    <property type="term" value="P:DNA recombination"/>
    <property type="evidence" value="ECO:0000318"/>
    <property type="project" value="GO_Central"/>
</dbReference>
<dbReference type="GO" id="GO:0006281">
    <property type="term" value="P:DNA repair"/>
    <property type="evidence" value="ECO:0000318"/>
    <property type="project" value="GO_Central"/>
</dbReference>
<dbReference type="CDD" id="cd17920">
    <property type="entry name" value="DEXHc_RecQ"/>
    <property type="match status" value="1"/>
</dbReference>
<dbReference type="CDD" id="cd18794">
    <property type="entry name" value="SF2_C_RecQ"/>
    <property type="match status" value="1"/>
</dbReference>
<dbReference type="FunFam" id="3.40.50.300:FF:002146">
    <property type="entry name" value="ATP-dependent DNA helicase"/>
    <property type="match status" value="1"/>
</dbReference>
<dbReference type="Gene3D" id="3.40.50.300">
    <property type="entry name" value="P-loop containing nucleotide triphosphate hydrolases"/>
    <property type="match status" value="2"/>
</dbReference>
<dbReference type="InterPro" id="IPR011545">
    <property type="entry name" value="DEAD/DEAH_box_helicase_dom"/>
</dbReference>
<dbReference type="InterPro" id="IPR004589">
    <property type="entry name" value="DNA_helicase_ATP-dep_RecQ"/>
</dbReference>
<dbReference type="InterPro" id="IPR014001">
    <property type="entry name" value="Helicase_ATP-bd"/>
</dbReference>
<dbReference type="InterPro" id="IPR001650">
    <property type="entry name" value="Helicase_C-like"/>
</dbReference>
<dbReference type="InterPro" id="IPR027417">
    <property type="entry name" value="P-loop_NTPase"/>
</dbReference>
<dbReference type="InterPro" id="IPR032284">
    <property type="entry name" value="RecQ_Zn-bd"/>
</dbReference>
<dbReference type="NCBIfam" id="TIGR00614">
    <property type="entry name" value="recQ_fam"/>
    <property type="match status" value="1"/>
</dbReference>
<dbReference type="PANTHER" id="PTHR13710:SF105">
    <property type="entry name" value="ATP-DEPENDENT DNA HELICASE Q1"/>
    <property type="match status" value="1"/>
</dbReference>
<dbReference type="PANTHER" id="PTHR13710">
    <property type="entry name" value="DNA HELICASE RECQ FAMILY MEMBER"/>
    <property type="match status" value="1"/>
</dbReference>
<dbReference type="Pfam" id="PF00270">
    <property type="entry name" value="DEAD"/>
    <property type="match status" value="1"/>
</dbReference>
<dbReference type="Pfam" id="PF00271">
    <property type="entry name" value="Helicase_C"/>
    <property type="match status" value="1"/>
</dbReference>
<dbReference type="Pfam" id="PF16124">
    <property type="entry name" value="RecQ_Zn_bind"/>
    <property type="match status" value="1"/>
</dbReference>
<dbReference type="SMART" id="SM00487">
    <property type="entry name" value="DEXDc"/>
    <property type="match status" value="1"/>
</dbReference>
<dbReference type="SMART" id="SM00490">
    <property type="entry name" value="HELICc"/>
    <property type="match status" value="1"/>
</dbReference>
<dbReference type="SUPFAM" id="SSF52540">
    <property type="entry name" value="P-loop containing nucleoside triphosphate hydrolases"/>
    <property type="match status" value="1"/>
</dbReference>
<dbReference type="PROSITE" id="PS51192">
    <property type="entry name" value="HELICASE_ATP_BIND_1"/>
    <property type="match status" value="1"/>
</dbReference>
<dbReference type="PROSITE" id="PS51194">
    <property type="entry name" value="HELICASE_CTER"/>
    <property type="match status" value="1"/>
</dbReference>
<organism>
    <name type="scientific">Synechocystis sp. (strain ATCC 27184 / PCC 6803 / Kazusa)</name>
    <dbReference type="NCBI Taxonomy" id="1111708"/>
    <lineage>
        <taxon>Bacteria</taxon>
        <taxon>Bacillati</taxon>
        <taxon>Cyanobacteriota</taxon>
        <taxon>Cyanophyceae</taxon>
        <taxon>Synechococcales</taxon>
        <taxon>Merismopediaceae</taxon>
        <taxon>Synechocystis</taxon>
    </lineage>
</organism>
<name>RECQ_SYNY3</name>
<gene>
    <name evidence="4" type="primary">recQ</name>
    <name type="ordered locus">slr1536</name>
</gene>